<feature type="chain" id="PRO_0000398220" description="Lipoyl synthase, mitochondrial">
    <location>
        <begin position="1"/>
        <end position="364"/>
    </location>
</feature>
<feature type="domain" description="Radical SAM core" evidence="2">
    <location>
        <begin position="116"/>
        <end position="334"/>
    </location>
</feature>
<feature type="binding site" evidence="1">
    <location>
        <position position="99"/>
    </location>
    <ligand>
        <name>[4Fe-4S] cluster</name>
        <dbReference type="ChEBI" id="CHEBI:49883"/>
        <label>1</label>
    </ligand>
</feature>
<feature type="binding site" evidence="1">
    <location>
        <position position="104"/>
    </location>
    <ligand>
        <name>[4Fe-4S] cluster</name>
        <dbReference type="ChEBI" id="CHEBI:49883"/>
        <label>1</label>
    </ligand>
</feature>
<feature type="binding site" evidence="1">
    <location>
        <position position="110"/>
    </location>
    <ligand>
        <name>[4Fe-4S] cluster</name>
        <dbReference type="ChEBI" id="CHEBI:49883"/>
        <label>1</label>
    </ligand>
</feature>
<feature type="binding site" evidence="1">
    <location>
        <position position="130"/>
    </location>
    <ligand>
        <name>[4Fe-4S] cluster</name>
        <dbReference type="ChEBI" id="CHEBI:49883"/>
        <label>2</label>
        <note>4Fe-4S-S-AdoMet</note>
    </ligand>
</feature>
<feature type="binding site" evidence="1">
    <location>
        <position position="134"/>
    </location>
    <ligand>
        <name>[4Fe-4S] cluster</name>
        <dbReference type="ChEBI" id="CHEBI:49883"/>
        <label>2</label>
        <note>4Fe-4S-S-AdoMet</note>
    </ligand>
</feature>
<feature type="binding site" evidence="1">
    <location>
        <position position="137"/>
    </location>
    <ligand>
        <name>[4Fe-4S] cluster</name>
        <dbReference type="ChEBI" id="CHEBI:49883"/>
        <label>2</label>
        <note>4Fe-4S-S-AdoMet</note>
    </ligand>
</feature>
<feature type="binding site" evidence="1">
    <location>
        <position position="345"/>
    </location>
    <ligand>
        <name>[4Fe-4S] cluster</name>
        <dbReference type="ChEBI" id="CHEBI:49883"/>
        <label>1</label>
    </ligand>
</feature>
<sequence length="364" mass="41232">MLRKLNTPTTTLVRAASTRVEKLEEIRERLSKGPNFQDFIQNSDGVKEDWENYDGKLRREKGETQQLRLPPWLKTTIPMGKNYAKIKSQLRDLKLSTVCEEARCPNIGECWGGGEHSTQTATIMLMGDTCTRGCRFCSVKTARAPPPLDVNEPVNTAKAISSWGLDYIVLTSVDRDDLPDGGSKHIAETVREIKARNSNIFVECLVPDFRGDLECVKTIASCGLDVYAHNIETVEKLTPFVRDRRAHYRQTLQVLREAKNFNPNLITKSSIMLGLGETDAEVEQTMQDLREVGVECLTLGQYMQPTKRHLKVIEYVTPEKFKHWEQRGNELGFLYTASGPLVRSSYKAGEFFITSILANRRKSV</sequence>
<accession>B4KYY0</accession>
<comment type="function">
    <text evidence="1">Catalyzes the radical-mediated insertion of two sulfur atoms into the C-6 and C-8 positions of the octanoyl moiety bound to the lipoyl domains of lipoate-dependent enzymes, thereby converting the octanoylated domains into lipoylated derivatives.</text>
</comment>
<comment type="catalytic activity">
    <reaction evidence="1">
        <text>[[Fe-S] cluster scaffold protein carrying a second [4Fe-4S](2+) cluster] + N(6)-octanoyl-L-lysyl-[protein] + 2 oxidized [2Fe-2S]-[ferredoxin] + 2 S-adenosyl-L-methionine + 4 H(+) = [[Fe-S] cluster scaffold protein] + N(6)-[(R)-dihydrolipoyl]-L-lysyl-[protein] + 4 Fe(3+) + 2 hydrogen sulfide + 2 5'-deoxyadenosine + 2 L-methionine + 2 reduced [2Fe-2S]-[ferredoxin]</text>
        <dbReference type="Rhea" id="RHEA:16585"/>
        <dbReference type="Rhea" id="RHEA-COMP:9928"/>
        <dbReference type="Rhea" id="RHEA-COMP:10000"/>
        <dbReference type="Rhea" id="RHEA-COMP:10001"/>
        <dbReference type="Rhea" id="RHEA-COMP:10475"/>
        <dbReference type="Rhea" id="RHEA-COMP:14568"/>
        <dbReference type="Rhea" id="RHEA-COMP:14569"/>
        <dbReference type="ChEBI" id="CHEBI:15378"/>
        <dbReference type="ChEBI" id="CHEBI:17319"/>
        <dbReference type="ChEBI" id="CHEBI:29034"/>
        <dbReference type="ChEBI" id="CHEBI:29919"/>
        <dbReference type="ChEBI" id="CHEBI:33722"/>
        <dbReference type="ChEBI" id="CHEBI:33737"/>
        <dbReference type="ChEBI" id="CHEBI:33738"/>
        <dbReference type="ChEBI" id="CHEBI:57844"/>
        <dbReference type="ChEBI" id="CHEBI:59789"/>
        <dbReference type="ChEBI" id="CHEBI:78809"/>
        <dbReference type="ChEBI" id="CHEBI:83100"/>
        <dbReference type="EC" id="2.8.1.8"/>
    </reaction>
</comment>
<comment type="cofactor">
    <cofactor evidence="1">
        <name>[4Fe-4S] cluster</name>
        <dbReference type="ChEBI" id="CHEBI:49883"/>
    </cofactor>
    <text evidence="1">Binds 2 [4Fe-4S] clusters per subunit. One cluster is coordinated with 3 cysteines and an exchangeable S-adenosyl-L-methionine.</text>
</comment>
<comment type="pathway">
    <text evidence="1">Protein modification; protein lipoylation via endogenous pathway; protein N(6)-(lipoyl)lysine from octanoyl-[acyl-carrier-protein]: step 2/2.</text>
</comment>
<comment type="subcellular location">
    <subcellularLocation>
        <location evidence="1">Mitochondrion</location>
    </subcellularLocation>
</comment>
<comment type="miscellaneous">
    <text evidence="1">This protein may be expected to contain an N-terminal transit peptide but none has been predicted.</text>
</comment>
<comment type="similarity">
    <text evidence="1">Belongs to the radical SAM superfamily. Lipoyl synthase family.</text>
</comment>
<dbReference type="EC" id="2.8.1.8" evidence="1"/>
<dbReference type="EMBL" id="CH933809">
    <property type="protein sequence ID" value="EDW18872.1"/>
    <property type="molecule type" value="Genomic_DNA"/>
</dbReference>
<dbReference type="RefSeq" id="XP_002008396.2">
    <property type="nucleotide sequence ID" value="XM_002008360.2"/>
</dbReference>
<dbReference type="SMR" id="B4KYY0"/>
<dbReference type="FunCoup" id="B4KYY0">
    <property type="interactions" value="1780"/>
</dbReference>
<dbReference type="EnsemblMetazoa" id="FBtr0164196">
    <property type="protein sequence ID" value="FBpp0162688"/>
    <property type="gene ID" value="FBgn0136227"/>
</dbReference>
<dbReference type="EnsemblMetazoa" id="XM_002008360.4">
    <property type="protein sequence ID" value="XP_002008396.3"/>
    <property type="gene ID" value="LOC6582704"/>
</dbReference>
<dbReference type="GeneID" id="6582704"/>
<dbReference type="KEGG" id="dmo:Dmoj_GI13471"/>
<dbReference type="CTD" id="40259"/>
<dbReference type="eggNOG" id="KOG2672">
    <property type="taxonomic scope" value="Eukaryota"/>
</dbReference>
<dbReference type="HOGENOM" id="CLU_033144_1_2_1"/>
<dbReference type="InParanoid" id="B4KYY0"/>
<dbReference type="OMA" id="PYCDIDF"/>
<dbReference type="OrthoDB" id="3231at2759"/>
<dbReference type="PhylomeDB" id="B4KYY0"/>
<dbReference type="UniPathway" id="UPA00538">
    <property type="reaction ID" value="UER00593"/>
</dbReference>
<dbReference type="ChiTaRS" id="Las">
    <property type="organism name" value="fly"/>
</dbReference>
<dbReference type="Proteomes" id="UP000009192">
    <property type="component" value="Unassembled WGS sequence"/>
</dbReference>
<dbReference type="GO" id="GO:0005739">
    <property type="term" value="C:mitochondrion"/>
    <property type="evidence" value="ECO:0007669"/>
    <property type="project" value="UniProtKB-SubCell"/>
</dbReference>
<dbReference type="GO" id="GO:0051539">
    <property type="term" value="F:4 iron, 4 sulfur cluster binding"/>
    <property type="evidence" value="ECO:0007669"/>
    <property type="project" value="UniProtKB-UniRule"/>
</dbReference>
<dbReference type="GO" id="GO:0016992">
    <property type="term" value="F:lipoate synthase activity"/>
    <property type="evidence" value="ECO:0007669"/>
    <property type="project" value="UniProtKB-UniRule"/>
</dbReference>
<dbReference type="GO" id="GO:0046872">
    <property type="term" value="F:metal ion binding"/>
    <property type="evidence" value="ECO:0007669"/>
    <property type="project" value="UniProtKB-KW"/>
</dbReference>
<dbReference type="CDD" id="cd01335">
    <property type="entry name" value="Radical_SAM"/>
    <property type="match status" value="1"/>
</dbReference>
<dbReference type="FunFam" id="3.20.20.70:FF:000036">
    <property type="entry name" value="Lipoyl synthase, mitochondrial"/>
    <property type="match status" value="1"/>
</dbReference>
<dbReference type="Gene3D" id="3.20.20.70">
    <property type="entry name" value="Aldolase class I"/>
    <property type="match status" value="1"/>
</dbReference>
<dbReference type="HAMAP" id="MF_00206">
    <property type="entry name" value="Lipoyl_synth"/>
    <property type="match status" value="1"/>
</dbReference>
<dbReference type="InterPro" id="IPR013785">
    <property type="entry name" value="Aldolase_TIM"/>
</dbReference>
<dbReference type="InterPro" id="IPR006638">
    <property type="entry name" value="Elp3/MiaA/NifB-like_rSAM"/>
</dbReference>
<dbReference type="InterPro" id="IPR031691">
    <property type="entry name" value="LIAS_N"/>
</dbReference>
<dbReference type="InterPro" id="IPR003698">
    <property type="entry name" value="Lipoyl_synth"/>
</dbReference>
<dbReference type="InterPro" id="IPR007197">
    <property type="entry name" value="rSAM"/>
</dbReference>
<dbReference type="NCBIfam" id="TIGR00510">
    <property type="entry name" value="lipA"/>
    <property type="match status" value="1"/>
</dbReference>
<dbReference type="NCBIfam" id="NF004019">
    <property type="entry name" value="PRK05481.1"/>
    <property type="match status" value="1"/>
</dbReference>
<dbReference type="NCBIfam" id="NF009544">
    <property type="entry name" value="PRK12928.1"/>
    <property type="match status" value="1"/>
</dbReference>
<dbReference type="PANTHER" id="PTHR10949">
    <property type="entry name" value="LIPOYL SYNTHASE"/>
    <property type="match status" value="1"/>
</dbReference>
<dbReference type="PANTHER" id="PTHR10949:SF0">
    <property type="entry name" value="LIPOYL SYNTHASE, MITOCHONDRIAL"/>
    <property type="match status" value="1"/>
</dbReference>
<dbReference type="Pfam" id="PF16881">
    <property type="entry name" value="LIAS_N"/>
    <property type="match status" value="1"/>
</dbReference>
<dbReference type="Pfam" id="PF04055">
    <property type="entry name" value="Radical_SAM"/>
    <property type="match status" value="1"/>
</dbReference>
<dbReference type="PIRSF" id="PIRSF005963">
    <property type="entry name" value="Lipoyl_synth"/>
    <property type="match status" value="1"/>
</dbReference>
<dbReference type="SFLD" id="SFLDF00271">
    <property type="entry name" value="lipoyl_synthase"/>
    <property type="match status" value="1"/>
</dbReference>
<dbReference type="SFLD" id="SFLDS00029">
    <property type="entry name" value="Radical_SAM"/>
    <property type="match status" value="1"/>
</dbReference>
<dbReference type="SMART" id="SM00729">
    <property type="entry name" value="Elp3"/>
    <property type="match status" value="1"/>
</dbReference>
<dbReference type="SUPFAM" id="SSF102114">
    <property type="entry name" value="Radical SAM enzymes"/>
    <property type="match status" value="1"/>
</dbReference>
<dbReference type="PROSITE" id="PS51918">
    <property type="entry name" value="RADICAL_SAM"/>
    <property type="match status" value="1"/>
</dbReference>
<organism>
    <name type="scientific">Drosophila mojavensis</name>
    <name type="common">Fruit fly</name>
    <dbReference type="NCBI Taxonomy" id="7230"/>
    <lineage>
        <taxon>Eukaryota</taxon>
        <taxon>Metazoa</taxon>
        <taxon>Ecdysozoa</taxon>
        <taxon>Arthropoda</taxon>
        <taxon>Hexapoda</taxon>
        <taxon>Insecta</taxon>
        <taxon>Pterygota</taxon>
        <taxon>Neoptera</taxon>
        <taxon>Endopterygota</taxon>
        <taxon>Diptera</taxon>
        <taxon>Brachycera</taxon>
        <taxon>Muscomorpha</taxon>
        <taxon>Ephydroidea</taxon>
        <taxon>Drosophilidae</taxon>
        <taxon>Drosophila</taxon>
    </lineage>
</organism>
<gene>
    <name evidence="1" type="primary">Las</name>
    <name type="ORF">GI13471</name>
</gene>
<protein>
    <recommendedName>
        <fullName evidence="1">Lipoyl synthase, mitochondrial</fullName>
        <ecNumber evidence="1">2.8.1.8</ecNumber>
    </recommendedName>
    <alternativeName>
        <fullName evidence="1">Lipoate synthase</fullName>
        <shortName evidence="1">LS</shortName>
        <shortName evidence="1">Lip-syn</shortName>
    </alternativeName>
    <alternativeName>
        <fullName evidence="1">Lipoic acid synthase</fullName>
    </alternativeName>
</protein>
<evidence type="ECO:0000255" key="1">
    <source>
        <dbReference type="HAMAP-Rule" id="MF_03123"/>
    </source>
</evidence>
<evidence type="ECO:0000255" key="2">
    <source>
        <dbReference type="PROSITE-ProRule" id="PRU01266"/>
    </source>
</evidence>
<name>LIAS_DROMO</name>
<proteinExistence type="inferred from homology"/>
<reference key="1">
    <citation type="journal article" date="2007" name="Nature">
        <title>Evolution of genes and genomes on the Drosophila phylogeny.</title>
        <authorList>
            <consortium name="Drosophila 12 genomes consortium"/>
        </authorList>
    </citation>
    <scope>NUCLEOTIDE SEQUENCE [LARGE SCALE GENOMIC DNA]</scope>
    <source>
        <strain>Tucson 15081-1352.22</strain>
    </source>
</reference>
<keyword id="KW-0004">4Fe-4S</keyword>
<keyword id="KW-0408">Iron</keyword>
<keyword id="KW-0411">Iron-sulfur</keyword>
<keyword id="KW-0479">Metal-binding</keyword>
<keyword id="KW-0496">Mitochondrion</keyword>
<keyword id="KW-1185">Reference proteome</keyword>
<keyword id="KW-0949">S-adenosyl-L-methionine</keyword>
<keyword id="KW-0808">Transferase</keyword>